<comment type="function">
    <text evidence="1">Involved in mitochondrial fission. Acts as an adapter protein required to form mitochondrial fission complexes. Formation of these complexes is required to promote constriction and fission of the mitochondrial compartment at a late step in mitochondrial division (By similarity).</text>
</comment>
<comment type="subcellular location">
    <subcellularLocation>
        <location evidence="1">Mitochondrion outer membrane</location>
        <topology evidence="1">Peripheral membrane protein</topology>
        <orientation evidence="1">Cytoplasmic side</orientation>
    </subcellularLocation>
</comment>
<comment type="similarity">
    <text evidence="4">Belongs to the WD repeat MDV1/CAF4 family.</text>
</comment>
<reference key="1">
    <citation type="journal article" date="2005" name="Science">
        <title>The genome of the basidiomycetous yeast and human pathogen Cryptococcus neoformans.</title>
        <authorList>
            <person name="Loftus B.J."/>
            <person name="Fung E."/>
            <person name="Roncaglia P."/>
            <person name="Rowley D."/>
            <person name="Amedeo P."/>
            <person name="Bruno D."/>
            <person name="Vamathevan J."/>
            <person name="Miranda M."/>
            <person name="Anderson I.J."/>
            <person name="Fraser J.A."/>
            <person name="Allen J.E."/>
            <person name="Bosdet I.E."/>
            <person name="Brent M.R."/>
            <person name="Chiu R."/>
            <person name="Doering T.L."/>
            <person name="Donlin M.J."/>
            <person name="D'Souza C.A."/>
            <person name="Fox D.S."/>
            <person name="Grinberg V."/>
            <person name="Fu J."/>
            <person name="Fukushima M."/>
            <person name="Haas B.J."/>
            <person name="Huang J.C."/>
            <person name="Janbon G."/>
            <person name="Jones S.J.M."/>
            <person name="Koo H.L."/>
            <person name="Krzywinski M.I."/>
            <person name="Kwon-Chung K.J."/>
            <person name="Lengeler K.B."/>
            <person name="Maiti R."/>
            <person name="Marra M.A."/>
            <person name="Marra R.E."/>
            <person name="Mathewson C.A."/>
            <person name="Mitchell T.G."/>
            <person name="Pertea M."/>
            <person name="Riggs F.R."/>
            <person name="Salzberg S.L."/>
            <person name="Schein J.E."/>
            <person name="Shvartsbeyn A."/>
            <person name="Shin H."/>
            <person name="Shumway M."/>
            <person name="Specht C.A."/>
            <person name="Suh B.B."/>
            <person name="Tenney A."/>
            <person name="Utterback T.R."/>
            <person name="Wickes B.L."/>
            <person name="Wortman J.R."/>
            <person name="Wye N.H."/>
            <person name="Kronstad J.W."/>
            <person name="Lodge J.K."/>
            <person name="Heitman J."/>
            <person name="Davis R.W."/>
            <person name="Fraser C.M."/>
            <person name="Hyman R.W."/>
        </authorList>
    </citation>
    <scope>NUCLEOTIDE SEQUENCE [LARGE SCALE GENOMIC DNA]</scope>
    <source>
        <strain>JEC21 / ATCC MYA-565</strain>
    </source>
</reference>
<gene>
    <name type="primary">MDV1</name>
    <name type="ordered locus">CNK02070</name>
</gene>
<keyword id="KW-0175">Coiled coil</keyword>
<keyword id="KW-0472">Membrane</keyword>
<keyword id="KW-0496">Mitochondrion</keyword>
<keyword id="KW-1000">Mitochondrion outer membrane</keyword>
<keyword id="KW-1185">Reference proteome</keyword>
<keyword id="KW-0677">Repeat</keyword>
<keyword id="KW-0853">WD repeat</keyword>
<proteinExistence type="inferred from homology"/>
<protein>
    <recommendedName>
        <fullName>Mitochondrial division protein 1</fullName>
    </recommendedName>
</protein>
<accession>P0CS44</accession>
<accession>Q55K39</accession>
<accession>Q5K9G0</accession>
<sequence>MANHHDHDKPLRSALDPISSPYFSSLNGTLSIAKEVLIGPFQGDHRRSESARILSDLAPSLMQPRFLNAASSSQQSLSKSSHPGAPYPLLRLPTNLPFNKSSRPTASSLAILEAVDNLASLSLGDVSHPQNGQNSPSLIRGFKATIPSSELAKQRRRMVRGGIVDEDLGGKIGLKKLGDRARGLLTEKGEDEEDGELGVGRHAVKKRRKKRESRRFTEGRHLEGKLRLEDLAKQADEIGQDKENLHVRQSLIQSEIAEVGAKIDALEDIRRHLEASLLHLQEEDLELDDELEGVQELMASPAIKAAAGAKSLPLSSSGAGISNKSSRRRKGPAFLPSEHDELPSGVAFMTLNGHTAPITALDFDEPYGMLVTAGQDDVVKVWDLCDGEEIGQLRGHRGTVKALQVEDTLCLTGGADGNVRLWDLRMVEDYEERLHTQLAELARQDPLERIAEQRAHEEDGEHAEQDDELPDGTLQDPQPGDGSPCVRTLEGHSKSVTSLYYEDGCLVTGSSDKTIRQWDVATGQCVLTMDILWAISNPPPPPSSVPPQRPPRLSHRSSTSFGSNTYEDILPSPGASLVGMSGAALLGAATGQNFAVPTPPYADGTWEMYQDFVGGVQFWGYALASGSGDGGVRMWDMRTGQAHRTLIGHTAPVTCLQFDEQYIVTGSLDRTVRIWDLRMGSVSEVHKYEYPVTALQFDSRKVVACTGENGVEVYNRTTHAHSRLVVNGHTKPAEKMRFIDKYLVSGGRDGCAKVWAM</sequence>
<feature type="chain" id="PRO_0000330104" description="Mitochondrial division protein 1">
    <location>
        <begin position="1"/>
        <end position="757"/>
    </location>
</feature>
<feature type="repeat" description="WD 1">
    <location>
        <begin position="353"/>
        <end position="394"/>
    </location>
</feature>
<feature type="repeat" description="WD 2">
    <location>
        <begin position="396"/>
        <end position="432"/>
    </location>
</feature>
<feature type="repeat" description="WD 3">
    <location>
        <begin position="491"/>
        <end position="528"/>
    </location>
</feature>
<feature type="repeat" description="WD 4">
    <location>
        <begin position="602"/>
        <end position="645"/>
    </location>
</feature>
<feature type="repeat" description="WD 5">
    <location>
        <begin position="648"/>
        <end position="685"/>
    </location>
</feature>
<feature type="repeat" description="WD 6">
    <location>
        <begin position="687"/>
        <end position="724"/>
    </location>
</feature>
<feature type="repeat" description="WD 7">
    <location>
        <begin position="728"/>
        <end position="757"/>
    </location>
</feature>
<feature type="region of interest" description="Disordered" evidence="3">
    <location>
        <begin position="69"/>
        <end position="88"/>
    </location>
</feature>
<feature type="region of interest" description="Disordered" evidence="3">
    <location>
        <begin position="312"/>
        <end position="336"/>
    </location>
</feature>
<feature type="region of interest" description="Disordered" evidence="3">
    <location>
        <begin position="454"/>
        <end position="489"/>
    </location>
</feature>
<feature type="region of interest" description="Disordered" evidence="3">
    <location>
        <begin position="538"/>
        <end position="564"/>
    </location>
</feature>
<feature type="coiled-coil region" evidence="2">
    <location>
        <begin position="225"/>
        <end position="300"/>
    </location>
</feature>
<feature type="compositionally biased region" description="Low complexity" evidence="3">
    <location>
        <begin position="71"/>
        <end position="81"/>
    </location>
</feature>
<feature type="compositionally biased region" description="Low complexity" evidence="3">
    <location>
        <begin position="312"/>
        <end position="324"/>
    </location>
</feature>
<feature type="compositionally biased region" description="Basic and acidic residues" evidence="3">
    <location>
        <begin position="454"/>
        <end position="463"/>
    </location>
</feature>
<feature type="compositionally biased region" description="Pro residues" evidence="3">
    <location>
        <begin position="538"/>
        <end position="550"/>
    </location>
</feature>
<name>MDV1_CRYNJ</name>
<evidence type="ECO:0000250" key="1"/>
<evidence type="ECO:0000255" key="2"/>
<evidence type="ECO:0000256" key="3">
    <source>
        <dbReference type="SAM" id="MobiDB-lite"/>
    </source>
</evidence>
<evidence type="ECO:0000305" key="4"/>
<dbReference type="EMBL" id="AE017351">
    <property type="protein sequence ID" value="AAW46166.1"/>
    <property type="molecule type" value="Genomic_DNA"/>
</dbReference>
<dbReference type="RefSeq" id="XP_567683.1">
    <property type="nucleotide sequence ID" value="XM_567683.1"/>
</dbReference>
<dbReference type="SMR" id="P0CS44"/>
<dbReference type="FunCoup" id="P0CS44">
    <property type="interactions" value="146"/>
</dbReference>
<dbReference type="STRING" id="214684.P0CS44"/>
<dbReference type="PaxDb" id="214684-P0CS44"/>
<dbReference type="EnsemblFungi" id="AAW46166">
    <property type="protein sequence ID" value="AAW46166"/>
    <property type="gene ID" value="CNK02070"/>
</dbReference>
<dbReference type="GeneID" id="3254504"/>
<dbReference type="KEGG" id="cne:CNK02070"/>
<dbReference type="VEuPathDB" id="FungiDB:CNK02070"/>
<dbReference type="eggNOG" id="KOG4155">
    <property type="taxonomic scope" value="Eukaryota"/>
</dbReference>
<dbReference type="HOGENOM" id="CLU_012350_0_0_1"/>
<dbReference type="InParanoid" id="P0CS44"/>
<dbReference type="OMA" id="ERLRYMD"/>
<dbReference type="OrthoDB" id="496at2759"/>
<dbReference type="Proteomes" id="UP000002149">
    <property type="component" value="Chromosome 11"/>
</dbReference>
<dbReference type="GO" id="GO:0005741">
    <property type="term" value="C:mitochondrial outer membrane"/>
    <property type="evidence" value="ECO:0007669"/>
    <property type="project" value="UniProtKB-SubCell"/>
</dbReference>
<dbReference type="GO" id="GO:0005634">
    <property type="term" value="C:nucleus"/>
    <property type="evidence" value="ECO:0000318"/>
    <property type="project" value="GO_Central"/>
</dbReference>
<dbReference type="GO" id="GO:1990234">
    <property type="term" value="C:transferase complex"/>
    <property type="evidence" value="ECO:0007669"/>
    <property type="project" value="UniProtKB-ARBA"/>
</dbReference>
<dbReference type="CDD" id="cd00200">
    <property type="entry name" value="WD40"/>
    <property type="match status" value="1"/>
</dbReference>
<dbReference type="FunFam" id="2.130.10.10:FF:000838">
    <property type="entry name" value="Mitochondrial division protein 1"/>
    <property type="match status" value="1"/>
</dbReference>
<dbReference type="FunFam" id="2.130.10.10:FF:000840">
    <property type="entry name" value="Related to CAF4-CCR4 associated factor"/>
    <property type="match status" value="1"/>
</dbReference>
<dbReference type="Gene3D" id="6.10.280.220">
    <property type="match status" value="1"/>
</dbReference>
<dbReference type="Gene3D" id="2.130.10.10">
    <property type="entry name" value="YVTN repeat-like/Quinoprotein amine dehydrogenase"/>
    <property type="match status" value="3"/>
</dbReference>
<dbReference type="InterPro" id="IPR020472">
    <property type="entry name" value="G-protein_beta_WD-40_rep"/>
</dbReference>
<dbReference type="InterPro" id="IPR015943">
    <property type="entry name" value="WD40/YVTN_repeat-like_dom_sf"/>
</dbReference>
<dbReference type="InterPro" id="IPR019775">
    <property type="entry name" value="WD40_repeat_CS"/>
</dbReference>
<dbReference type="InterPro" id="IPR036322">
    <property type="entry name" value="WD40_repeat_dom_sf"/>
</dbReference>
<dbReference type="InterPro" id="IPR001680">
    <property type="entry name" value="WD40_rpt"/>
</dbReference>
<dbReference type="PANTHER" id="PTHR22847:SF637">
    <property type="entry name" value="WD REPEAT DOMAIN 5B"/>
    <property type="match status" value="1"/>
</dbReference>
<dbReference type="PANTHER" id="PTHR22847">
    <property type="entry name" value="WD40 REPEAT PROTEIN"/>
    <property type="match status" value="1"/>
</dbReference>
<dbReference type="Pfam" id="PF00400">
    <property type="entry name" value="WD40"/>
    <property type="match status" value="4"/>
</dbReference>
<dbReference type="PRINTS" id="PR00320">
    <property type="entry name" value="GPROTEINBRPT"/>
</dbReference>
<dbReference type="SMART" id="SM00320">
    <property type="entry name" value="WD40"/>
    <property type="match status" value="7"/>
</dbReference>
<dbReference type="SUPFAM" id="SSF50978">
    <property type="entry name" value="WD40 repeat-like"/>
    <property type="match status" value="1"/>
</dbReference>
<dbReference type="PROSITE" id="PS00678">
    <property type="entry name" value="WD_REPEATS_1"/>
    <property type="match status" value="4"/>
</dbReference>
<dbReference type="PROSITE" id="PS50082">
    <property type="entry name" value="WD_REPEATS_2"/>
    <property type="match status" value="6"/>
</dbReference>
<dbReference type="PROSITE" id="PS50294">
    <property type="entry name" value="WD_REPEATS_REGION"/>
    <property type="match status" value="1"/>
</dbReference>
<organism>
    <name type="scientific">Cryptococcus neoformans var. neoformans serotype D (strain JEC21 / ATCC MYA-565)</name>
    <name type="common">Filobasidiella neoformans</name>
    <dbReference type="NCBI Taxonomy" id="214684"/>
    <lineage>
        <taxon>Eukaryota</taxon>
        <taxon>Fungi</taxon>
        <taxon>Dikarya</taxon>
        <taxon>Basidiomycota</taxon>
        <taxon>Agaricomycotina</taxon>
        <taxon>Tremellomycetes</taxon>
        <taxon>Tremellales</taxon>
        <taxon>Cryptococcaceae</taxon>
        <taxon>Cryptococcus</taxon>
        <taxon>Cryptococcus neoformans species complex</taxon>
    </lineage>
</organism>